<feature type="chain" id="PRO_1000123546" description="Probable oxaloacetate decarboxylase gamma chain">
    <location>
        <begin position="1"/>
        <end position="82"/>
    </location>
</feature>
<feature type="transmembrane region" description="Helical" evidence="1">
    <location>
        <begin position="12"/>
        <end position="32"/>
    </location>
</feature>
<reference key="1">
    <citation type="journal article" date="2009" name="PLoS Genet.">
        <title>Organised genome dynamics in the Escherichia coli species results in highly diverse adaptive paths.</title>
        <authorList>
            <person name="Touchon M."/>
            <person name="Hoede C."/>
            <person name="Tenaillon O."/>
            <person name="Barbe V."/>
            <person name="Baeriswyl S."/>
            <person name="Bidet P."/>
            <person name="Bingen E."/>
            <person name="Bonacorsi S."/>
            <person name="Bouchier C."/>
            <person name="Bouvet O."/>
            <person name="Calteau A."/>
            <person name="Chiapello H."/>
            <person name="Clermont O."/>
            <person name="Cruveiller S."/>
            <person name="Danchin A."/>
            <person name="Diard M."/>
            <person name="Dossat C."/>
            <person name="Karoui M.E."/>
            <person name="Frapy E."/>
            <person name="Garry L."/>
            <person name="Ghigo J.M."/>
            <person name="Gilles A.M."/>
            <person name="Johnson J."/>
            <person name="Le Bouguenec C."/>
            <person name="Lescat M."/>
            <person name="Mangenot S."/>
            <person name="Martinez-Jehanne V."/>
            <person name="Matic I."/>
            <person name="Nassif X."/>
            <person name="Oztas S."/>
            <person name="Petit M.A."/>
            <person name="Pichon C."/>
            <person name="Rouy Z."/>
            <person name="Ruf C.S."/>
            <person name="Schneider D."/>
            <person name="Tourret J."/>
            <person name="Vacherie B."/>
            <person name="Vallenet D."/>
            <person name="Medigue C."/>
            <person name="Rocha E.P.C."/>
            <person name="Denamur E."/>
        </authorList>
    </citation>
    <scope>NUCLEOTIDE SEQUENCE [LARGE SCALE GENOMIC DNA]</scope>
    <source>
        <strain>ATCC 35469 / DSM 13698 / BCRC 15582 / CCUG 18766 / IAM 14443 / JCM 21226 / LMG 7866 / NBRC 102419 / NCTC 12128 / CDC 0568-73</strain>
    </source>
</reference>
<name>OADG_ESCF3</name>
<comment type="function">
    <text evidence="1">Catalyzes the decarboxylation of oxaloacetate coupled to Na(+) translocation.</text>
</comment>
<comment type="catalytic activity">
    <reaction evidence="1">
        <text>oxaloacetate + 2 Na(+)(in) + H(+) = pyruvate + 2 Na(+)(out) + CO2</text>
        <dbReference type="Rhea" id="RHEA:57724"/>
        <dbReference type="ChEBI" id="CHEBI:15361"/>
        <dbReference type="ChEBI" id="CHEBI:15378"/>
        <dbReference type="ChEBI" id="CHEBI:16452"/>
        <dbReference type="ChEBI" id="CHEBI:16526"/>
        <dbReference type="ChEBI" id="CHEBI:29101"/>
        <dbReference type="EC" id="7.2.4.2"/>
    </reaction>
</comment>
<comment type="cofactor">
    <cofactor evidence="1">
        <name>Na(+)</name>
        <dbReference type="ChEBI" id="CHEBI:29101"/>
    </cofactor>
</comment>
<comment type="subunit">
    <text evidence="1">Heterotrimer of an alpha, a beta and a gamma subunit.</text>
</comment>
<comment type="subcellular location">
    <subcellularLocation>
        <location evidence="1">Cell membrane</location>
        <topology evidence="1">Single-pass membrane protein</topology>
    </subcellularLocation>
</comment>
<comment type="similarity">
    <text evidence="1">Belongs to the OadG family.</text>
</comment>
<sequence length="82" mass="8763">MNAAQLLGEGFTLMFLGMGFVLGFLCLLILAIKSMSVAVNRFFPEPVAAPKPAATTAAPADDFSRLKPVIAAAIHHHRRLNS</sequence>
<accession>B7LVP2</accession>
<evidence type="ECO:0000255" key="1">
    <source>
        <dbReference type="HAMAP-Rule" id="MF_00404"/>
    </source>
</evidence>
<gene>
    <name evidence="1" type="primary">oadG</name>
    <name type="ordered locus">EFER_0030</name>
</gene>
<dbReference type="EC" id="7.2.4.2" evidence="1"/>
<dbReference type="EMBL" id="CU928158">
    <property type="protein sequence ID" value="CAQ87616.1"/>
    <property type="molecule type" value="Genomic_DNA"/>
</dbReference>
<dbReference type="RefSeq" id="WP_000990547.1">
    <property type="nucleotide sequence ID" value="NC_011740.1"/>
</dbReference>
<dbReference type="SMR" id="B7LVP2"/>
<dbReference type="KEGG" id="efe:EFER_0030"/>
<dbReference type="HOGENOM" id="CLU_168750_3_2_6"/>
<dbReference type="OrthoDB" id="5772594at2"/>
<dbReference type="Proteomes" id="UP000000745">
    <property type="component" value="Chromosome"/>
</dbReference>
<dbReference type="GO" id="GO:0005886">
    <property type="term" value="C:plasma membrane"/>
    <property type="evidence" value="ECO:0007669"/>
    <property type="project" value="UniProtKB-SubCell"/>
</dbReference>
<dbReference type="GO" id="GO:0015451">
    <property type="term" value="F:decarboxylation-driven active transmembrane transporter activity"/>
    <property type="evidence" value="ECO:0007669"/>
    <property type="project" value="UniProtKB-EC"/>
</dbReference>
<dbReference type="GO" id="GO:0008948">
    <property type="term" value="F:oxaloacetate decarboxylase activity"/>
    <property type="evidence" value="ECO:0007669"/>
    <property type="project" value="UniProtKB-UniRule"/>
</dbReference>
<dbReference type="GO" id="GO:0015081">
    <property type="term" value="F:sodium ion transmembrane transporter activity"/>
    <property type="evidence" value="ECO:0007669"/>
    <property type="project" value="UniProtKB-UniRule"/>
</dbReference>
<dbReference type="GO" id="GO:0036376">
    <property type="term" value="P:sodium ion export across plasma membrane"/>
    <property type="evidence" value="ECO:0007669"/>
    <property type="project" value="InterPro"/>
</dbReference>
<dbReference type="HAMAP" id="MF_00404">
    <property type="entry name" value="OadG"/>
    <property type="match status" value="1"/>
</dbReference>
<dbReference type="InterPro" id="IPR005899">
    <property type="entry name" value="Na_pump_deCOase"/>
</dbReference>
<dbReference type="InterPro" id="IPR023424">
    <property type="entry name" value="OadG"/>
</dbReference>
<dbReference type="NCBIfam" id="TIGR01195">
    <property type="entry name" value="oadG_fam"/>
    <property type="match status" value="1"/>
</dbReference>
<dbReference type="NCBIfam" id="NF002792">
    <property type="entry name" value="PRK02919.1"/>
    <property type="match status" value="1"/>
</dbReference>
<dbReference type="Pfam" id="PF04277">
    <property type="entry name" value="OAD_gamma"/>
    <property type="match status" value="1"/>
</dbReference>
<organism>
    <name type="scientific">Escherichia fergusonii (strain ATCC 35469 / DSM 13698 / CCUG 18766 / IAM 14443 / JCM 21226 / LMG 7866 / NBRC 102419 / NCTC 12128 / CDC 0568-73)</name>
    <dbReference type="NCBI Taxonomy" id="585054"/>
    <lineage>
        <taxon>Bacteria</taxon>
        <taxon>Pseudomonadati</taxon>
        <taxon>Pseudomonadota</taxon>
        <taxon>Gammaproteobacteria</taxon>
        <taxon>Enterobacterales</taxon>
        <taxon>Enterobacteriaceae</taxon>
        <taxon>Escherichia</taxon>
    </lineage>
</organism>
<protein>
    <recommendedName>
        <fullName evidence="1">Probable oxaloacetate decarboxylase gamma chain</fullName>
        <ecNumber evidence="1">7.2.4.2</ecNumber>
    </recommendedName>
</protein>
<proteinExistence type="inferred from homology"/>
<keyword id="KW-1003">Cell membrane</keyword>
<keyword id="KW-0406">Ion transport</keyword>
<keyword id="KW-0472">Membrane</keyword>
<keyword id="KW-0915">Sodium</keyword>
<keyword id="KW-0739">Sodium transport</keyword>
<keyword id="KW-1278">Translocase</keyword>
<keyword id="KW-0812">Transmembrane</keyword>
<keyword id="KW-1133">Transmembrane helix</keyword>
<keyword id="KW-0813">Transport</keyword>